<evidence type="ECO:0000250" key="1">
    <source>
        <dbReference type="UniProtKB" id="P00967"/>
    </source>
</evidence>
<evidence type="ECO:0000250" key="2">
    <source>
        <dbReference type="UniProtKB" id="P08179"/>
    </source>
</evidence>
<evidence type="ECO:0000250" key="3">
    <source>
        <dbReference type="UniProtKB" id="P15640"/>
    </source>
</evidence>
<evidence type="ECO:0000250" key="4">
    <source>
        <dbReference type="UniProtKB" id="P21872"/>
    </source>
</evidence>
<evidence type="ECO:0000250" key="5">
    <source>
        <dbReference type="UniProtKB" id="P22102"/>
    </source>
</evidence>
<evidence type="ECO:0000255" key="6">
    <source>
        <dbReference type="PROSITE-ProRule" id="PRU00409"/>
    </source>
</evidence>
<evidence type="ECO:0000305" key="7"/>
<proteinExistence type="inferred from homology"/>
<comment type="function">
    <text evidence="1">Trifunctional enzyme that catalyzes three distinct reactions as part of the 'de novo' inosine monophosphate biosynthetic pathway.</text>
</comment>
<comment type="catalytic activity">
    <reaction evidence="1">
        <text>5-phospho-beta-D-ribosylamine + glycine + ATP = N(1)-(5-phospho-beta-D-ribosyl)glycinamide + ADP + phosphate + H(+)</text>
        <dbReference type="Rhea" id="RHEA:17453"/>
        <dbReference type="ChEBI" id="CHEBI:15378"/>
        <dbReference type="ChEBI" id="CHEBI:30616"/>
        <dbReference type="ChEBI" id="CHEBI:43474"/>
        <dbReference type="ChEBI" id="CHEBI:57305"/>
        <dbReference type="ChEBI" id="CHEBI:58681"/>
        <dbReference type="ChEBI" id="CHEBI:143788"/>
        <dbReference type="ChEBI" id="CHEBI:456216"/>
        <dbReference type="EC" id="6.3.4.13"/>
    </reaction>
    <physiologicalReaction direction="left-to-right" evidence="1">
        <dbReference type="Rhea" id="RHEA:17454"/>
    </physiologicalReaction>
</comment>
<comment type="catalytic activity">
    <reaction evidence="1">
        <text>2-formamido-N(1)-(5-O-phospho-beta-D-ribosyl)acetamidine + ATP = 5-amino-1-(5-phospho-beta-D-ribosyl)imidazole + ADP + phosphate + H(+)</text>
        <dbReference type="Rhea" id="RHEA:23032"/>
        <dbReference type="ChEBI" id="CHEBI:15378"/>
        <dbReference type="ChEBI" id="CHEBI:30616"/>
        <dbReference type="ChEBI" id="CHEBI:43474"/>
        <dbReference type="ChEBI" id="CHEBI:137981"/>
        <dbReference type="ChEBI" id="CHEBI:147287"/>
        <dbReference type="ChEBI" id="CHEBI:456216"/>
        <dbReference type="EC" id="6.3.3.1"/>
    </reaction>
    <physiologicalReaction direction="left-to-right" evidence="1">
        <dbReference type="Rhea" id="RHEA:23033"/>
    </physiologicalReaction>
</comment>
<comment type="catalytic activity">
    <reaction evidence="1">
        <text>N(1)-(5-phospho-beta-D-ribosyl)glycinamide + (6R)-10-formyltetrahydrofolate = N(2)-formyl-N(1)-(5-phospho-beta-D-ribosyl)glycinamide + (6S)-5,6,7,8-tetrahydrofolate + H(+)</text>
        <dbReference type="Rhea" id="RHEA:15053"/>
        <dbReference type="ChEBI" id="CHEBI:15378"/>
        <dbReference type="ChEBI" id="CHEBI:57453"/>
        <dbReference type="ChEBI" id="CHEBI:143788"/>
        <dbReference type="ChEBI" id="CHEBI:147286"/>
        <dbReference type="ChEBI" id="CHEBI:195366"/>
        <dbReference type="EC" id="2.1.2.2"/>
    </reaction>
    <physiologicalReaction direction="left-to-right" evidence="1">
        <dbReference type="Rhea" id="RHEA:15054"/>
    </physiologicalReaction>
</comment>
<comment type="cofactor">
    <cofactor evidence="3 6">
        <name>Mg(2+)</name>
        <dbReference type="ChEBI" id="CHEBI:18420"/>
    </cofactor>
    <cofactor evidence="6">
        <name>Mn(2+)</name>
        <dbReference type="ChEBI" id="CHEBI:29035"/>
    </cofactor>
    <text evidence="6">Binds 1 magnesium or manganese ion per subunit.</text>
</comment>
<comment type="pathway">
    <text evidence="1">Purine metabolism; IMP biosynthesis via de novo pathway; 5-amino-1-(5-phospho-D-ribosyl)imidazole from N(2)-formyl-N(1)-(5-phospho-D-ribosyl)glycinamide: step 2/2.</text>
</comment>
<comment type="pathway">
    <text evidence="1">Purine metabolism; IMP biosynthesis via de novo pathway; N(1)-(5-phospho-D-ribosyl)glycinamide from 5-phospho-alpha-D-ribose 1-diphosphate: step 2/2.</text>
</comment>
<comment type="pathway">
    <text evidence="1">Purine metabolism; IMP biosynthesis via de novo pathway; N(2)-formyl-N(1)-(5-phospho-D-ribosyl)glycinamide from N(1)-(5-phospho-D-ribosyl)glycinamide (10-formyl THF route): step 1/1.</text>
</comment>
<comment type="subunit">
    <text evidence="5">Homodimer.</text>
</comment>
<comment type="domain">
    <text evidence="5">The N-terminal ATP-grasp domain carries the phosphoribosylamine--glycine ligase activity.</text>
</comment>
<comment type="domain">
    <text evidence="5">The central AIRS domain carries the phosphoribosylformylglycinamidine cyclo-ligase activity.</text>
</comment>
<comment type="domain">
    <text evidence="5">The C-terminal GART domain carries the phosphoribosylglycinamide formyltransferase activity.</text>
</comment>
<comment type="similarity">
    <text evidence="7">In the N-terminal section; belongs to the GARS family.</text>
</comment>
<comment type="similarity">
    <text evidence="7">In the central section; belongs to the AIR synthase family.</text>
</comment>
<comment type="similarity">
    <text evidence="7">In the C-terminal section; belongs to the GART family.</text>
</comment>
<reference key="1">
    <citation type="journal article" date="1992" name="J. Mol. Evol.">
        <title>Unusual organizational features of the Drosophila Gart locus are not conserved within Diptera.</title>
        <authorList>
            <person name="Clark D.V."/>
            <person name="Henikoff S."/>
        </authorList>
    </citation>
    <scope>NUCLEOTIDE SEQUENCE [GENOMIC DNA]</scope>
</reference>
<gene>
    <name type="primary">GART</name>
</gene>
<keyword id="KW-0067">ATP-binding</keyword>
<keyword id="KW-0436">Ligase</keyword>
<keyword id="KW-0460">Magnesium</keyword>
<keyword id="KW-0464">Manganese</keyword>
<keyword id="KW-0479">Metal-binding</keyword>
<keyword id="KW-0511">Multifunctional enzyme</keyword>
<keyword id="KW-0547">Nucleotide-binding</keyword>
<keyword id="KW-0658">Purine biosynthesis</keyword>
<keyword id="KW-0808">Transferase</keyword>
<dbReference type="EC" id="6.3.4.13" evidence="1"/>
<dbReference type="EC" id="6.3.3.1" evidence="1"/>
<dbReference type="EC" id="2.1.2.2" evidence="1"/>
<dbReference type="EMBL" id="S43653">
    <property type="protein sequence ID" value="AAB23115.1"/>
    <property type="molecule type" value="Genomic_DNA"/>
</dbReference>
<dbReference type="SMR" id="Q26255"/>
<dbReference type="UniPathway" id="UPA00074">
    <property type="reaction ID" value="UER00125"/>
</dbReference>
<dbReference type="UniPathway" id="UPA00074">
    <property type="reaction ID" value="UER00126"/>
</dbReference>
<dbReference type="UniPathway" id="UPA00074">
    <property type="reaction ID" value="UER00129"/>
</dbReference>
<dbReference type="GO" id="GO:0005829">
    <property type="term" value="C:cytosol"/>
    <property type="evidence" value="ECO:0007669"/>
    <property type="project" value="TreeGrafter"/>
</dbReference>
<dbReference type="GO" id="GO:0005524">
    <property type="term" value="F:ATP binding"/>
    <property type="evidence" value="ECO:0007669"/>
    <property type="project" value="UniProtKB-KW"/>
</dbReference>
<dbReference type="GO" id="GO:0046872">
    <property type="term" value="F:metal ion binding"/>
    <property type="evidence" value="ECO:0007669"/>
    <property type="project" value="UniProtKB-KW"/>
</dbReference>
<dbReference type="GO" id="GO:0004637">
    <property type="term" value="F:phosphoribosylamine-glycine ligase activity"/>
    <property type="evidence" value="ECO:0007669"/>
    <property type="project" value="UniProtKB-EC"/>
</dbReference>
<dbReference type="GO" id="GO:0004641">
    <property type="term" value="F:phosphoribosylformylglycinamidine cyclo-ligase activity"/>
    <property type="evidence" value="ECO:0007669"/>
    <property type="project" value="UniProtKB-EC"/>
</dbReference>
<dbReference type="GO" id="GO:0004644">
    <property type="term" value="F:phosphoribosylglycinamide formyltransferase activity"/>
    <property type="evidence" value="ECO:0007669"/>
    <property type="project" value="UniProtKB-EC"/>
</dbReference>
<dbReference type="GO" id="GO:0006189">
    <property type="term" value="P:'de novo' IMP biosynthetic process"/>
    <property type="evidence" value="ECO:0007669"/>
    <property type="project" value="UniProtKB-UniPathway"/>
</dbReference>
<dbReference type="GO" id="GO:0046084">
    <property type="term" value="P:adenine biosynthetic process"/>
    <property type="evidence" value="ECO:0007669"/>
    <property type="project" value="TreeGrafter"/>
</dbReference>
<dbReference type="CDD" id="cd08645">
    <property type="entry name" value="FMT_core_GART"/>
    <property type="match status" value="1"/>
</dbReference>
<dbReference type="CDD" id="cd02196">
    <property type="entry name" value="PurM"/>
    <property type="match status" value="2"/>
</dbReference>
<dbReference type="FunFam" id="3.40.50.20:FF:000006">
    <property type="entry name" value="Phosphoribosylamine--glycine ligase, chloroplastic"/>
    <property type="match status" value="1"/>
</dbReference>
<dbReference type="FunFam" id="3.30.1490.20:FF:000006">
    <property type="entry name" value="phosphoribosylamine--glycine ligase, chloroplastic-like"/>
    <property type="match status" value="1"/>
</dbReference>
<dbReference type="FunFam" id="3.30.1330.10:FF:000001">
    <property type="entry name" value="Phosphoribosylformylglycinamidine cyclo-ligase"/>
    <property type="match status" value="2"/>
</dbReference>
<dbReference type="FunFam" id="3.30.470.20:FF:000018">
    <property type="entry name" value="Trifunctional purine biosynthetic protein adenosine-3"/>
    <property type="match status" value="1"/>
</dbReference>
<dbReference type="FunFam" id="3.40.50.170:FF:000006">
    <property type="entry name" value="Trifunctional purine biosynthetic protein adenosine-3"/>
    <property type="match status" value="1"/>
</dbReference>
<dbReference type="FunFam" id="3.90.600.10:FF:000001">
    <property type="entry name" value="Trifunctional purine biosynthetic protein adenosine-3"/>
    <property type="match status" value="1"/>
</dbReference>
<dbReference type="Gene3D" id="3.40.50.20">
    <property type="match status" value="1"/>
</dbReference>
<dbReference type="Gene3D" id="3.30.1490.20">
    <property type="entry name" value="ATP-grasp fold, A domain"/>
    <property type="match status" value="1"/>
</dbReference>
<dbReference type="Gene3D" id="3.30.470.20">
    <property type="entry name" value="ATP-grasp fold, B domain"/>
    <property type="match status" value="1"/>
</dbReference>
<dbReference type="Gene3D" id="3.40.50.170">
    <property type="entry name" value="Formyl transferase, N-terminal domain"/>
    <property type="match status" value="1"/>
</dbReference>
<dbReference type="Gene3D" id="3.90.600.10">
    <property type="entry name" value="Phosphoribosylglycinamide synthetase, C-terminal domain"/>
    <property type="match status" value="1"/>
</dbReference>
<dbReference type="Gene3D" id="3.90.650.10">
    <property type="entry name" value="PurM-like C-terminal domain"/>
    <property type="match status" value="2"/>
</dbReference>
<dbReference type="Gene3D" id="3.30.1330.10">
    <property type="entry name" value="PurM-like, N-terminal domain"/>
    <property type="match status" value="2"/>
</dbReference>
<dbReference type="HAMAP" id="MF_00741">
    <property type="entry name" value="AIRS"/>
    <property type="match status" value="2"/>
</dbReference>
<dbReference type="HAMAP" id="MF_00138">
    <property type="entry name" value="GARS"/>
    <property type="match status" value="1"/>
</dbReference>
<dbReference type="HAMAP" id="MF_01930">
    <property type="entry name" value="PurN"/>
    <property type="match status" value="1"/>
</dbReference>
<dbReference type="InterPro" id="IPR011761">
    <property type="entry name" value="ATP-grasp"/>
</dbReference>
<dbReference type="InterPro" id="IPR013815">
    <property type="entry name" value="ATP_grasp_subdomain_1"/>
</dbReference>
<dbReference type="InterPro" id="IPR002376">
    <property type="entry name" value="Formyl_transf_N"/>
</dbReference>
<dbReference type="InterPro" id="IPR036477">
    <property type="entry name" value="Formyl_transf_N_sf"/>
</dbReference>
<dbReference type="InterPro" id="IPR004607">
    <property type="entry name" value="GART"/>
</dbReference>
<dbReference type="InterPro" id="IPR001555">
    <property type="entry name" value="GART_AS"/>
</dbReference>
<dbReference type="InterPro" id="IPR016185">
    <property type="entry name" value="PreATP-grasp_dom_sf"/>
</dbReference>
<dbReference type="InterPro" id="IPR020561">
    <property type="entry name" value="PRibGlycinamid_synth_ATP-grasp"/>
</dbReference>
<dbReference type="InterPro" id="IPR000115">
    <property type="entry name" value="PRibGlycinamide_synth"/>
</dbReference>
<dbReference type="InterPro" id="IPR020560">
    <property type="entry name" value="PRibGlycinamide_synth_C-dom"/>
</dbReference>
<dbReference type="InterPro" id="IPR037123">
    <property type="entry name" value="PRibGlycinamide_synth_C_sf"/>
</dbReference>
<dbReference type="InterPro" id="IPR020559">
    <property type="entry name" value="PRibGlycinamide_synth_CS"/>
</dbReference>
<dbReference type="InterPro" id="IPR020562">
    <property type="entry name" value="PRibGlycinamide_synth_N"/>
</dbReference>
<dbReference type="InterPro" id="IPR010918">
    <property type="entry name" value="PurM-like_C_dom"/>
</dbReference>
<dbReference type="InterPro" id="IPR036676">
    <property type="entry name" value="PurM-like_C_sf"/>
</dbReference>
<dbReference type="InterPro" id="IPR016188">
    <property type="entry name" value="PurM-like_N"/>
</dbReference>
<dbReference type="InterPro" id="IPR036921">
    <property type="entry name" value="PurM-like_N_sf"/>
</dbReference>
<dbReference type="InterPro" id="IPR004733">
    <property type="entry name" value="PurM_cligase"/>
</dbReference>
<dbReference type="InterPro" id="IPR011054">
    <property type="entry name" value="Rudment_hybrid_motif"/>
</dbReference>
<dbReference type="NCBIfam" id="TIGR00877">
    <property type="entry name" value="purD"/>
    <property type="match status" value="1"/>
</dbReference>
<dbReference type="NCBIfam" id="TIGR00878">
    <property type="entry name" value="purM"/>
    <property type="match status" value="2"/>
</dbReference>
<dbReference type="NCBIfam" id="TIGR00639">
    <property type="entry name" value="PurN"/>
    <property type="match status" value="1"/>
</dbReference>
<dbReference type="PANTHER" id="PTHR10520:SF12">
    <property type="entry name" value="TRIFUNCTIONAL PURINE BIOSYNTHETIC PROTEIN ADENOSINE-3"/>
    <property type="match status" value="1"/>
</dbReference>
<dbReference type="PANTHER" id="PTHR10520">
    <property type="entry name" value="TRIFUNCTIONAL PURINE BIOSYNTHETIC PROTEIN ADENOSINE-3-RELATED"/>
    <property type="match status" value="1"/>
</dbReference>
<dbReference type="Pfam" id="PF00586">
    <property type="entry name" value="AIRS"/>
    <property type="match status" value="2"/>
</dbReference>
<dbReference type="Pfam" id="PF02769">
    <property type="entry name" value="AIRS_C"/>
    <property type="match status" value="2"/>
</dbReference>
<dbReference type="Pfam" id="PF00551">
    <property type="entry name" value="Formyl_trans_N"/>
    <property type="match status" value="1"/>
</dbReference>
<dbReference type="Pfam" id="PF01071">
    <property type="entry name" value="GARS_A"/>
    <property type="match status" value="1"/>
</dbReference>
<dbReference type="Pfam" id="PF02843">
    <property type="entry name" value="GARS_C"/>
    <property type="match status" value="1"/>
</dbReference>
<dbReference type="Pfam" id="PF02844">
    <property type="entry name" value="GARS_N"/>
    <property type="match status" value="1"/>
</dbReference>
<dbReference type="SMART" id="SM01209">
    <property type="entry name" value="GARS_A"/>
    <property type="match status" value="1"/>
</dbReference>
<dbReference type="SMART" id="SM01210">
    <property type="entry name" value="GARS_C"/>
    <property type="match status" value="1"/>
</dbReference>
<dbReference type="SUPFAM" id="SSF53328">
    <property type="entry name" value="Formyltransferase"/>
    <property type="match status" value="1"/>
</dbReference>
<dbReference type="SUPFAM" id="SSF56059">
    <property type="entry name" value="Glutathione synthetase ATP-binding domain-like"/>
    <property type="match status" value="1"/>
</dbReference>
<dbReference type="SUPFAM" id="SSF52440">
    <property type="entry name" value="PreATP-grasp domain"/>
    <property type="match status" value="1"/>
</dbReference>
<dbReference type="SUPFAM" id="SSF56042">
    <property type="entry name" value="PurM C-terminal domain-like"/>
    <property type="match status" value="2"/>
</dbReference>
<dbReference type="SUPFAM" id="SSF55326">
    <property type="entry name" value="PurM N-terminal domain-like"/>
    <property type="match status" value="2"/>
</dbReference>
<dbReference type="SUPFAM" id="SSF51246">
    <property type="entry name" value="Rudiment single hybrid motif"/>
    <property type="match status" value="1"/>
</dbReference>
<dbReference type="PROSITE" id="PS50975">
    <property type="entry name" value="ATP_GRASP"/>
    <property type="match status" value="1"/>
</dbReference>
<dbReference type="PROSITE" id="PS00184">
    <property type="entry name" value="GARS"/>
    <property type="match status" value="1"/>
</dbReference>
<dbReference type="PROSITE" id="PS00373">
    <property type="entry name" value="GART"/>
    <property type="match status" value="1"/>
</dbReference>
<accession>Q26255</accession>
<protein>
    <recommendedName>
        <fullName>Trifunctional purine biosynthetic protein adenosine-3</fullName>
    </recommendedName>
    <domain>
        <recommendedName>
            <fullName>Phosphoribosylamine--glycine ligase</fullName>
            <ecNumber evidence="1">6.3.4.13</ecNumber>
        </recommendedName>
        <alternativeName>
            <fullName>Glycinamide ribonucleotide synthetase</fullName>
            <shortName>GARS</shortName>
        </alternativeName>
        <alternativeName>
            <fullName>Phosphoribosylglycinamide synthetase</fullName>
        </alternativeName>
    </domain>
    <domain>
        <recommendedName>
            <fullName>Phosphoribosylformylglycinamidine cyclo-ligase</fullName>
            <ecNumber evidence="1">6.3.3.1</ecNumber>
        </recommendedName>
        <alternativeName>
            <fullName>AIR synthase</fullName>
            <shortName>AIRS</shortName>
        </alternativeName>
        <alternativeName>
            <fullName>Phosphoribosyl-aminoimidazole synthetase</fullName>
        </alternativeName>
    </domain>
    <domain>
        <recommendedName>
            <fullName>Phosphoribosylglycinamide formyltransferase</fullName>
            <ecNumber evidence="1">2.1.2.2</ecNumber>
        </recommendedName>
        <alternativeName>
            <fullName>5'-phosphoribosylglycinamide transformylase</fullName>
        </alternativeName>
        <alternativeName>
            <fullName>GAR transformylase</fullName>
            <shortName>GART</shortName>
        </alternativeName>
    </domain>
</protein>
<feature type="chain" id="PRO_0000074933" description="Trifunctional purine biosynthetic protein adenosine-3">
    <location>
        <begin position="1"/>
        <end position="1371"/>
    </location>
</feature>
<feature type="domain" description="ATP-grasp" evidence="6">
    <location>
        <begin position="115"/>
        <end position="321"/>
    </location>
</feature>
<feature type="region of interest" description="AIRS domain" evidence="4">
    <location>
        <begin position="434"/>
        <end position="1171"/>
    </location>
</feature>
<feature type="region of interest" description="GART domain" evidence="4">
    <location>
        <begin position="1169"/>
        <end position="1369"/>
    </location>
</feature>
<feature type="active site" description="Proton donor" evidence="2">
    <location>
        <position position="1279"/>
    </location>
</feature>
<feature type="binding site" evidence="5">
    <location>
        <begin position="193"/>
        <end position="196"/>
    </location>
    <ligand>
        <name>ATP</name>
        <dbReference type="ChEBI" id="CHEBI:30616"/>
    </ligand>
</feature>
<feature type="binding site" evidence="5">
    <location>
        <position position="200"/>
    </location>
    <ligand>
        <name>ATP</name>
        <dbReference type="ChEBI" id="CHEBI:30616"/>
    </ligand>
</feature>
<feature type="binding site" evidence="5">
    <location>
        <position position="223"/>
    </location>
    <ligand>
        <name>ATP</name>
        <dbReference type="ChEBI" id="CHEBI:30616"/>
    </ligand>
</feature>
<feature type="binding site" evidence="5">
    <location>
        <position position="232"/>
    </location>
    <ligand>
        <name>ATP</name>
        <dbReference type="ChEBI" id="CHEBI:30616"/>
    </ligand>
</feature>
<feature type="binding site" evidence="6">
    <location>
        <position position="291"/>
    </location>
    <ligand>
        <name>Mg(2+)</name>
        <dbReference type="ChEBI" id="CHEBI:18420"/>
    </ligand>
</feature>
<feature type="binding site" evidence="6">
    <location>
        <position position="293"/>
    </location>
    <ligand>
        <name>Mg(2+)</name>
        <dbReference type="ChEBI" id="CHEBI:18420"/>
    </ligand>
</feature>
<feature type="binding site" evidence="5">
    <location>
        <begin position="1180"/>
        <end position="1182"/>
    </location>
    <ligand>
        <name>N(1)-(5-phospho-beta-D-ribosyl)glycinamide</name>
        <dbReference type="ChEBI" id="CHEBI:143788"/>
    </ligand>
</feature>
<feature type="binding site" evidence="5">
    <location>
        <position position="1235"/>
    </location>
    <ligand>
        <name>(6R)-10-formyltetrahydrofolate</name>
        <dbReference type="ChEBI" id="CHEBI:195366"/>
    </ligand>
</feature>
<feature type="binding site" evidence="5">
    <location>
        <begin position="1260"/>
        <end position="1263"/>
    </location>
    <ligand>
        <name>(6R)-10-formyltetrahydrofolate</name>
        <dbReference type="ChEBI" id="CHEBI:195366"/>
    </ligand>
</feature>
<feature type="binding site" evidence="5">
    <location>
        <position position="1277"/>
    </location>
    <ligand>
        <name>(6R)-10-formyltetrahydrofolate</name>
        <dbReference type="ChEBI" id="CHEBI:195366"/>
    </ligand>
</feature>
<feature type="binding site" evidence="5">
    <location>
        <begin position="1311"/>
        <end position="1315"/>
    </location>
    <ligand>
        <name>(6R)-10-formyltetrahydrofolate</name>
        <dbReference type="ChEBI" id="CHEBI:195366"/>
    </ligand>
</feature>
<feature type="binding site" evidence="5">
    <location>
        <begin position="1341"/>
        <end position="1344"/>
    </location>
    <ligand>
        <name>N(1)-(5-phospho-beta-D-ribosyl)glycinamide</name>
        <dbReference type="ChEBI" id="CHEBI:143788"/>
    </ligand>
</feature>
<feature type="site" description="Raises pKa of active site His" evidence="2">
    <location>
        <position position="1315"/>
    </location>
</feature>
<sequence length="1371" mass="149103">MTGKKLLLIGSGGREHALAWKLQQSKNVTEIFAFPGSIGISQLEKVQLVNNNEMNLKDFKGIASWCKINHIDLVIVGPEDPLAEGIADQLKAANIHCFGPSKAGARIESDKSWSKDFMIRHHIPTAQYGSFIDALKAKDFIRNTPNALVVKASGLAAGKGVIVAENIEEACAAVDEILGDHKFGTAGDVVVVEEKLSGQEVSVLGFVDSNSVRILPPAQDHKRLKDNDEGLNTGGMGAYCPCPLISQQELDIVKSQVLQRAVDGLRKENILYNGILYAGIMLTHDGPKTLEFNCRFGDPETQIILPLLDEDLYDLMMASCTNHLCNVPELKFKSNINAVGVVMASKGYPETSTKGCVISGIESVETMDNHIVFHSGTSKNNKDEWITNGGRVLINIALADNLKKAADLATKACDVVKFDGSQYRRDIGKKAFQIHSLTYKESGVNIEAGNSLVGRIKSLSYGTHRSGVVGQIGSFGGLMRLNDIKYINSNGEESNYKDIVLVQGTDGVGTKLKIAESMNVWDTIGIDLVAMCVNDVLCNGAEPIGFLDYIACGHLEVPTVATIVKGIADGCRKANCALIGGETAEMPSMYGKGKYDLAGYCVGITEYDEILPKINDVHVGDVVIGLPSSGIHSNGFSLVNKIFQQTGFKLTDIAEFSDSHKSYGMEFLTPTRLYVSETLPFLRNGYVKALAHITGGGLLENIPRILPNHLSVQIDALTWKLPKVFSWLAAHGNVNANEMLRTFNCGIGMIIIMPRNDIEWETIPEARMIGSITQRDHNGPQVIVKNFKEVLHKEVTHWKKGDAETTSISYKDSGVDITAGNELVDNIKPHAKSTNRKGVIGGLGSFGGLFRINECGTKFEDPMLVLATDGVGTKLKIAQQLGKHDTVGIDLVAMCNNDILCNGAEPLTFLDYFACGKLDVNVATNVVSGIAEGCRQSDSTLLGGETAEMPGMYNPNVYDLAGFSLGVAEHEDILPKKNCLEVGDIIIGFPSNGVHSNGFSLIHKLFELTGYKWTDIAPFSAYGKTFGEEFLEPTKVYVKEISPALKTGYVKALAHITGGGLWDNIPRVLPYNLTAELDAKKINISPVFAWLSLNGNIDKLELLKTFNCGIGMIMIASKEHELEILKSLYGSRASVIGKIIPTKPHGHQVIVRHFATCFERVERLLSIPKKRVGVLISGSGSNLQALIDATKSTNMGMCSEIVFVLSNKAGIFGLERAAKANIPSTVISNKDYATREAFDVALHNELIKHNVEIICLAGFMRILTPCFVNKWKGKLLNIHPSLLPKYKGITAQKDALESGDNESGCTVHFVDENVDTGAIIVQEIVPIFENDTVESLTERIHVAEHIAFPKALRLVASGYVRLNDKCETEWA</sequence>
<name>PUR2_CHITE</name>
<organism>
    <name type="scientific">Chironomus tentans</name>
    <name type="common">Midge</name>
    <name type="synonym">Camptochironomus tentans</name>
    <dbReference type="NCBI Taxonomy" id="7153"/>
    <lineage>
        <taxon>Eukaryota</taxon>
        <taxon>Metazoa</taxon>
        <taxon>Ecdysozoa</taxon>
        <taxon>Arthropoda</taxon>
        <taxon>Hexapoda</taxon>
        <taxon>Insecta</taxon>
        <taxon>Pterygota</taxon>
        <taxon>Neoptera</taxon>
        <taxon>Endopterygota</taxon>
        <taxon>Diptera</taxon>
        <taxon>Nematocera</taxon>
        <taxon>Chironomoidea</taxon>
        <taxon>Chironomidae</taxon>
        <taxon>Chironominae</taxon>
        <taxon>Chironomus</taxon>
    </lineage>
</organism>